<dbReference type="EMBL" id="DS239429">
    <property type="protein sequence ID" value="EDP30182.1"/>
    <property type="molecule type" value="Genomic_DNA"/>
</dbReference>
<dbReference type="RefSeq" id="XP_001901502.1">
    <property type="nucleotide sequence ID" value="XM_001901467.1"/>
</dbReference>
<dbReference type="SMR" id="A8QCY3"/>
<dbReference type="FunCoup" id="A8QCY3">
    <property type="interactions" value="2250"/>
</dbReference>
<dbReference type="STRING" id="6279.A8QCY3"/>
<dbReference type="WormBase" id="Bm2693">
    <property type="protein sequence ID" value="BM29983"/>
    <property type="gene ID" value="WBGene00222954"/>
    <property type="gene designation" value="Bma-eif-3.H"/>
</dbReference>
<dbReference type="InParanoid" id="A8QCY3"/>
<dbReference type="Proteomes" id="UP000006672">
    <property type="component" value="Unassembled WGS sequence"/>
</dbReference>
<dbReference type="GO" id="GO:0016282">
    <property type="term" value="C:eukaryotic 43S preinitiation complex"/>
    <property type="evidence" value="ECO:0007669"/>
    <property type="project" value="UniProtKB-UniRule"/>
</dbReference>
<dbReference type="GO" id="GO:0033290">
    <property type="term" value="C:eukaryotic 48S preinitiation complex"/>
    <property type="evidence" value="ECO:0007669"/>
    <property type="project" value="UniProtKB-UniRule"/>
</dbReference>
<dbReference type="GO" id="GO:0005852">
    <property type="term" value="C:eukaryotic translation initiation factor 3 complex"/>
    <property type="evidence" value="ECO:0007669"/>
    <property type="project" value="UniProtKB-UniRule"/>
</dbReference>
<dbReference type="GO" id="GO:0008237">
    <property type="term" value="F:metallopeptidase activity"/>
    <property type="evidence" value="ECO:0007669"/>
    <property type="project" value="InterPro"/>
</dbReference>
<dbReference type="GO" id="GO:0003743">
    <property type="term" value="F:translation initiation factor activity"/>
    <property type="evidence" value="ECO:0007669"/>
    <property type="project" value="UniProtKB-UniRule"/>
</dbReference>
<dbReference type="GO" id="GO:0001732">
    <property type="term" value="P:formation of cytoplasmic translation initiation complex"/>
    <property type="evidence" value="ECO:0007669"/>
    <property type="project" value="UniProtKB-UniRule"/>
</dbReference>
<dbReference type="CDD" id="cd08065">
    <property type="entry name" value="MPN_eIF3h"/>
    <property type="match status" value="1"/>
</dbReference>
<dbReference type="FunFam" id="3.40.140.10:FF:000087">
    <property type="entry name" value="Eukaryotic translation initiation factor 3 subunit H"/>
    <property type="match status" value="1"/>
</dbReference>
<dbReference type="Gene3D" id="3.40.140.10">
    <property type="entry name" value="Cytidine Deaminase, domain 2"/>
    <property type="match status" value="1"/>
</dbReference>
<dbReference type="HAMAP" id="MF_03007">
    <property type="entry name" value="eIF3h"/>
    <property type="match status" value="1"/>
</dbReference>
<dbReference type="InterPro" id="IPR027524">
    <property type="entry name" value="eIF3h"/>
</dbReference>
<dbReference type="InterPro" id="IPR045810">
    <property type="entry name" value="eIF3h_C"/>
</dbReference>
<dbReference type="InterPro" id="IPR000555">
    <property type="entry name" value="JAMM/MPN+_dom"/>
</dbReference>
<dbReference type="InterPro" id="IPR050242">
    <property type="entry name" value="JAMM_MPN+_peptidase_M67A"/>
</dbReference>
<dbReference type="InterPro" id="IPR037518">
    <property type="entry name" value="MPN"/>
</dbReference>
<dbReference type="PANTHER" id="PTHR10410">
    <property type="entry name" value="EUKARYOTIC TRANSLATION INITIATION FACTOR 3 -RELATED"/>
    <property type="match status" value="1"/>
</dbReference>
<dbReference type="Pfam" id="PF19445">
    <property type="entry name" value="eIF3h_C"/>
    <property type="match status" value="1"/>
</dbReference>
<dbReference type="Pfam" id="PF01398">
    <property type="entry name" value="JAB"/>
    <property type="match status" value="1"/>
</dbReference>
<dbReference type="SMART" id="SM00232">
    <property type="entry name" value="JAB_MPN"/>
    <property type="match status" value="1"/>
</dbReference>
<dbReference type="PROSITE" id="PS50249">
    <property type="entry name" value="MPN"/>
    <property type="match status" value="1"/>
</dbReference>
<reference key="1">
    <citation type="journal article" date="2007" name="Science">
        <title>Draft genome of the filarial nematode parasite Brugia malayi.</title>
        <authorList>
            <person name="Ghedin E."/>
            <person name="Wang S."/>
            <person name="Spiro D."/>
            <person name="Caler E."/>
            <person name="Zhao Q."/>
            <person name="Crabtree J."/>
            <person name="Allen J.E."/>
            <person name="Delcher A.L."/>
            <person name="Guiliano D.B."/>
            <person name="Miranda-Saavedra D."/>
            <person name="Angiuoli S.V."/>
            <person name="Creasy T."/>
            <person name="Amedeo P."/>
            <person name="Haas B."/>
            <person name="El-Sayed N.M."/>
            <person name="Wortman J.R."/>
            <person name="Feldblyum T."/>
            <person name="Tallon L."/>
            <person name="Schatz M."/>
            <person name="Shumway M."/>
            <person name="Koo H."/>
            <person name="Salzberg S.L."/>
            <person name="Schobel S."/>
            <person name="Pertea M."/>
            <person name="Pop M."/>
            <person name="White O."/>
            <person name="Barton G.J."/>
            <person name="Carlow C.K.S."/>
            <person name="Crawford M.J."/>
            <person name="Daub J."/>
            <person name="Dimmic M.W."/>
            <person name="Estes C.F."/>
            <person name="Foster J.M."/>
            <person name="Ganatra M."/>
            <person name="Gregory W.F."/>
            <person name="Johnson N.M."/>
            <person name="Jin J."/>
            <person name="Komuniecki R."/>
            <person name="Korf I."/>
            <person name="Kumar S."/>
            <person name="Laney S."/>
            <person name="Li B.-W."/>
            <person name="Li W."/>
            <person name="Lindblom T.H."/>
            <person name="Lustigman S."/>
            <person name="Ma D."/>
            <person name="Maina C.V."/>
            <person name="Martin D.M."/>
            <person name="McCarter J.P."/>
            <person name="McReynolds L."/>
            <person name="Mitreva M."/>
            <person name="Nutman T.B."/>
            <person name="Parkinson J."/>
            <person name="Peregrin-Alvarez J.M."/>
            <person name="Poole C."/>
            <person name="Ren Q."/>
            <person name="Saunders L."/>
            <person name="Sluder A.E."/>
            <person name="Smith K."/>
            <person name="Stanke M."/>
            <person name="Unnasch T.R."/>
            <person name="Ware J."/>
            <person name="Wei A.D."/>
            <person name="Weil G."/>
            <person name="Williams D.J."/>
            <person name="Zhang Y."/>
            <person name="Williams S.A."/>
            <person name="Fraser-Liggett C."/>
            <person name="Slatko B."/>
            <person name="Blaxter M.L."/>
            <person name="Scott A.L."/>
        </authorList>
    </citation>
    <scope>NUCLEOTIDE SEQUENCE [LARGE SCALE GENOMIC DNA]</scope>
</reference>
<name>EIF3H_BRUMA</name>
<sequence>MSTISATVAGPSIVQFVQIDSLVVMKIVKHVDSEMYAGLNEVAGEACQGLLTGLVSIDDRRLEITNCFPTARAEPMLDGDEIAQNNAFYEEQKQAEMLDMLRKFRDMNIDYELVGFYQAHPFGACFAQETIDSLIDYQASVPDGVVLIYDPVKTRQGQLSIRAYRLSTKALEMSLDGDWSPESTRTAGLTYENMLEELPVVIKNSHLVNVMLAELALEGDCAIQRSSSHLELGTRRSLEKCLRSLMSDVDDLNRTVMAYTKYVADKQRYDLTVYNAMQKRQAENEQREARGEPPLSFDDIKKMKPPQLTTKCGMLESFLCSSDARAHSDYAAEACLRHFSFSSFCLCFFNENIAKLFLAEAVVDSHGSRDHGGAAASVR</sequence>
<keyword id="KW-0963">Cytoplasm</keyword>
<keyword id="KW-0396">Initiation factor</keyword>
<keyword id="KW-0648">Protein biosynthesis</keyword>
<keyword id="KW-1185">Reference proteome</keyword>
<feature type="chain" id="PRO_0000365196" description="Eukaryotic translation initiation factor 3 subunit H">
    <location>
        <begin position="1"/>
        <end position="379"/>
    </location>
</feature>
<feature type="domain" description="MPN" evidence="2">
    <location>
        <begin position="17"/>
        <end position="170"/>
    </location>
</feature>
<feature type="region of interest" description="Disordered" evidence="3">
    <location>
        <begin position="280"/>
        <end position="300"/>
    </location>
</feature>
<feature type="compositionally biased region" description="Basic and acidic residues" evidence="3">
    <location>
        <begin position="280"/>
        <end position="291"/>
    </location>
</feature>
<accession>A8QCY3</accession>
<organism>
    <name type="scientific">Brugia malayi</name>
    <name type="common">Filarial nematode worm</name>
    <dbReference type="NCBI Taxonomy" id="6279"/>
    <lineage>
        <taxon>Eukaryota</taxon>
        <taxon>Metazoa</taxon>
        <taxon>Ecdysozoa</taxon>
        <taxon>Nematoda</taxon>
        <taxon>Chromadorea</taxon>
        <taxon>Rhabditida</taxon>
        <taxon>Spirurina</taxon>
        <taxon>Spiruromorpha</taxon>
        <taxon>Filarioidea</taxon>
        <taxon>Onchocercidae</taxon>
        <taxon>Brugia</taxon>
    </lineage>
</organism>
<evidence type="ECO:0000255" key="1">
    <source>
        <dbReference type="HAMAP-Rule" id="MF_03007"/>
    </source>
</evidence>
<evidence type="ECO:0000255" key="2">
    <source>
        <dbReference type="PROSITE-ProRule" id="PRU01182"/>
    </source>
</evidence>
<evidence type="ECO:0000256" key="3">
    <source>
        <dbReference type="SAM" id="MobiDB-lite"/>
    </source>
</evidence>
<proteinExistence type="inferred from homology"/>
<protein>
    <recommendedName>
        <fullName evidence="1">Eukaryotic translation initiation factor 3 subunit H</fullName>
        <shortName evidence="1">eIF3h</shortName>
    </recommendedName>
</protein>
<gene>
    <name type="ORF">Bm1_50170</name>
</gene>
<comment type="function">
    <text evidence="1">Component of the eukaryotic translation initiation factor 3 (eIF-3) complex, which is involved in protein synthesis of a specialized repertoire of mRNAs and, together with other initiation factors, stimulates binding of mRNA and methionyl-tRNAi to the 40S ribosome. The eIF-3 complex specifically targets and initiates translation of a subset of mRNAs involved in cell proliferation.</text>
</comment>
<comment type="subunit">
    <text evidence="1">Component of the eukaryotic translation initiation factor 3 (eIF-3) complex.</text>
</comment>
<comment type="subcellular location">
    <subcellularLocation>
        <location evidence="1">Cytoplasm</location>
    </subcellularLocation>
</comment>
<comment type="similarity">
    <text evidence="1">Belongs to the eIF-3 subunit H family.</text>
</comment>